<organism>
    <name type="scientific">Paraburkholderia xenovorans (strain LB400)</name>
    <dbReference type="NCBI Taxonomy" id="266265"/>
    <lineage>
        <taxon>Bacteria</taxon>
        <taxon>Pseudomonadati</taxon>
        <taxon>Pseudomonadota</taxon>
        <taxon>Betaproteobacteria</taxon>
        <taxon>Burkholderiales</taxon>
        <taxon>Burkholderiaceae</taxon>
        <taxon>Paraburkholderia</taxon>
    </lineage>
</organism>
<accession>Q13V13</accession>
<reference key="1">
    <citation type="journal article" date="2006" name="Proc. Natl. Acad. Sci. U.S.A.">
        <title>Burkholderia xenovorans LB400 harbors a multi-replicon, 9.73-Mbp genome shaped for versatility.</title>
        <authorList>
            <person name="Chain P.S.G."/>
            <person name="Denef V.J."/>
            <person name="Konstantinidis K.T."/>
            <person name="Vergez L.M."/>
            <person name="Agullo L."/>
            <person name="Reyes V.L."/>
            <person name="Hauser L."/>
            <person name="Cordova M."/>
            <person name="Gomez L."/>
            <person name="Gonzalez M."/>
            <person name="Land M."/>
            <person name="Lao V."/>
            <person name="Larimer F."/>
            <person name="LiPuma J.J."/>
            <person name="Mahenthiralingam E."/>
            <person name="Malfatti S.A."/>
            <person name="Marx C.J."/>
            <person name="Parnell J.J."/>
            <person name="Ramette A."/>
            <person name="Richardson P."/>
            <person name="Seeger M."/>
            <person name="Smith D."/>
            <person name="Spilker T."/>
            <person name="Sul W.J."/>
            <person name="Tsoi T.V."/>
            <person name="Ulrich L.E."/>
            <person name="Zhulin I.B."/>
            <person name="Tiedje J.M."/>
        </authorList>
    </citation>
    <scope>NUCLEOTIDE SEQUENCE [LARGE SCALE GENOMIC DNA]</scope>
    <source>
        <strain>LB400</strain>
    </source>
</reference>
<gene>
    <name evidence="1" type="primary">uppP1</name>
    <name type="ordered locus">Bxeno_A3538</name>
    <name type="ORF">Bxe_A0858</name>
</gene>
<protein>
    <recommendedName>
        <fullName evidence="1">Undecaprenyl-diphosphatase 1</fullName>
        <ecNumber evidence="1">3.6.1.27</ecNumber>
    </recommendedName>
    <alternativeName>
        <fullName evidence="1">Bacitracin resistance protein 1</fullName>
    </alternativeName>
    <alternativeName>
        <fullName evidence="1">Undecaprenyl pyrophosphate phosphatase 1</fullName>
    </alternativeName>
</protein>
<proteinExistence type="inferred from homology"/>
<keyword id="KW-0046">Antibiotic resistance</keyword>
<keyword id="KW-0997">Cell inner membrane</keyword>
<keyword id="KW-1003">Cell membrane</keyword>
<keyword id="KW-0133">Cell shape</keyword>
<keyword id="KW-0961">Cell wall biogenesis/degradation</keyword>
<keyword id="KW-0378">Hydrolase</keyword>
<keyword id="KW-0472">Membrane</keyword>
<keyword id="KW-0573">Peptidoglycan synthesis</keyword>
<keyword id="KW-1185">Reference proteome</keyword>
<keyword id="KW-0812">Transmembrane</keyword>
<keyword id="KW-1133">Transmembrane helix</keyword>
<dbReference type="EC" id="3.6.1.27" evidence="1"/>
<dbReference type="EMBL" id="CP000270">
    <property type="protein sequence ID" value="ABE32076.1"/>
    <property type="molecule type" value="Genomic_DNA"/>
</dbReference>
<dbReference type="RefSeq" id="WP_011489582.1">
    <property type="nucleotide sequence ID" value="NC_007951.1"/>
</dbReference>
<dbReference type="SMR" id="Q13V13"/>
<dbReference type="STRING" id="266265.Bxe_A0858"/>
<dbReference type="KEGG" id="bxb:DR64_3023"/>
<dbReference type="KEGG" id="bxe:Bxe_A0858"/>
<dbReference type="PATRIC" id="fig|266265.5.peg.3724"/>
<dbReference type="eggNOG" id="COG1968">
    <property type="taxonomic scope" value="Bacteria"/>
</dbReference>
<dbReference type="OrthoDB" id="9808289at2"/>
<dbReference type="Proteomes" id="UP000001817">
    <property type="component" value="Chromosome 1"/>
</dbReference>
<dbReference type="GO" id="GO:0005886">
    <property type="term" value="C:plasma membrane"/>
    <property type="evidence" value="ECO:0007669"/>
    <property type="project" value="UniProtKB-SubCell"/>
</dbReference>
<dbReference type="GO" id="GO:0050380">
    <property type="term" value="F:undecaprenyl-diphosphatase activity"/>
    <property type="evidence" value="ECO:0007669"/>
    <property type="project" value="UniProtKB-UniRule"/>
</dbReference>
<dbReference type="GO" id="GO:0071555">
    <property type="term" value="P:cell wall organization"/>
    <property type="evidence" value="ECO:0007669"/>
    <property type="project" value="UniProtKB-KW"/>
</dbReference>
<dbReference type="GO" id="GO:0009252">
    <property type="term" value="P:peptidoglycan biosynthetic process"/>
    <property type="evidence" value="ECO:0007669"/>
    <property type="project" value="UniProtKB-KW"/>
</dbReference>
<dbReference type="GO" id="GO:0008360">
    <property type="term" value="P:regulation of cell shape"/>
    <property type="evidence" value="ECO:0007669"/>
    <property type="project" value="UniProtKB-KW"/>
</dbReference>
<dbReference type="GO" id="GO:0046677">
    <property type="term" value="P:response to antibiotic"/>
    <property type="evidence" value="ECO:0007669"/>
    <property type="project" value="UniProtKB-UniRule"/>
</dbReference>
<dbReference type="HAMAP" id="MF_01006">
    <property type="entry name" value="Undec_diphosphatase"/>
    <property type="match status" value="1"/>
</dbReference>
<dbReference type="InterPro" id="IPR003824">
    <property type="entry name" value="UppP"/>
</dbReference>
<dbReference type="NCBIfam" id="NF001389">
    <property type="entry name" value="PRK00281.1-2"/>
    <property type="match status" value="1"/>
</dbReference>
<dbReference type="NCBIfam" id="NF001390">
    <property type="entry name" value="PRK00281.1-4"/>
    <property type="match status" value="1"/>
</dbReference>
<dbReference type="NCBIfam" id="TIGR00753">
    <property type="entry name" value="undec_PP_bacA"/>
    <property type="match status" value="1"/>
</dbReference>
<dbReference type="PANTHER" id="PTHR30622">
    <property type="entry name" value="UNDECAPRENYL-DIPHOSPHATASE"/>
    <property type="match status" value="1"/>
</dbReference>
<dbReference type="PANTHER" id="PTHR30622:SF3">
    <property type="entry name" value="UNDECAPRENYL-DIPHOSPHATASE"/>
    <property type="match status" value="1"/>
</dbReference>
<dbReference type="Pfam" id="PF02673">
    <property type="entry name" value="BacA"/>
    <property type="match status" value="1"/>
</dbReference>
<evidence type="ECO:0000255" key="1">
    <source>
        <dbReference type="HAMAP-Rule" id="MF_01006"/>
    </source>
</evidence>
<sequence>MDWLLACKALILGVVEGLTEFLPVSSTGHLIVAGSLLNFTDEHAKTFDVVIQLGAILAVCWEYRRRIGSVVSGLPSRPDARRFTLNVIIATIPAIVLGLLFEKTIKAALFSPVPVAFALVAGGVVILWAESRQRTRGETVARVQNVDDLGALDALKVGLAQCFALIPGMSRSGSTIIGGMLFGLDRRVATEFSFFLAIPIIFGATAYELHKDWHLLSVDALGTFALGFVAAFVSAFACVRWLLRYIAAHDFTAFAWYRIGFGLLILLVGYSGALNWTE</sequence>
<comment type="function">
    <text evidence="1">Catalyzes the dephosphorylation of undecaprenyl diphosphate (UPP). Confers resistance to bacitracin.</text>
</comment>
<comment type="catalytic activity">
    <reaction evidence="1">
        <text>di-trans,octa-cis-undecaprenyl diphosphate + H2O = di-trans,octa-cis-undecaprenyl phosphate + phosphate + H(+)</text>
        <dbReference type="Rhea" id="RHEA:28094"/>
        <dbReference type="ChEBI" id="CHEBI:15377"/>
        <dbReference type="ChEBI" id="CHEBI:15378"/>
        <dbReference type="ChEBI" id="CHEBI:43474"/>
        <dbReference type="ChEBI" id="CHEBI:58405"/>
        <dbReference type="ChEBI" id="CHEBI:60392"/>
        <dbReference type="EC" id="3.6.1.27"/>
    </reaction>
</comment>
<comment type="subcellular location">
    <subcellularLocation>
        <location evidence="1">Cell inner membrane</location>
        <topology evidence="1">Multi-pass membrane protein</topology>
    </subcellularLocation>
</comment>
<comment type="miscellaneous">
    <text>Bacitracin is thought to be involved in the inhibition of peptidoglycan synthesis by sequestering undecaprenyl diphosphate, thereby reducing the pool of lipid carrier available.</text>
</comment>
<comment type="similarity">
    <text evidence="1">Belongs to the UppP family.</text>
</comment>
<name>UPPP1_PARXL</name>
<feature type="chain" id="PRO_0000250230" description="Undecaprenyl-diphosphatase 1">
    <location>
        <begin position="1"/>
        <end position="278"/>
    </location>
</feature>
<feature type="transmembrane region" description="Helical" evidence="1">
    <location>
        <begin position="85"/>
        <end position="105"/>
    </location>
</feature>
<feature type="transmembrane region" description="Helical" evidence="1">
    <location>
        <begin position="108"/>
        <end position="128"/>
    </location>
</feature>
<feature type="transmembrane region" description="Helical" evidence="1">
    <location>
        <begin position="188"/>
        <end position="208"/>
    </location>
</feature>
<feature type="transmembrane region" description="Helical" evidence="1">
    <location>
        <begin position="218"/>
        <end position="238"/>
    </location>
</feature>
<feature type="transmembrane region" description="Helical" evidence="1">
    <location>
        <begin position="254"/>
        <end position="274"/>
    </location>
</feature>